<gene>
    <name type="primary">RPL32</name>
    <name type="ordered locus">ECU04_1310</name>
</gene>
<keyword id="KW-0002">3D-structure</keyword>
<keyword id="KW-1185">Reference proteome</keyword>
<keyword id="KW-0687">Ribonucleoprotein</keyword>
<keyword id="KW-0689">Ribosomal protein</keyword>
<accession>Q8SS18</accession>
<comment type="similarity">
    <text evidence="1">Belongs to the eukaryotic ribosomal protein eL32 family.</text>
</comment>
<name>RL32_ENCCU</name>
<feature type="chain" id="PRO_0000131141" description="Large ribosomal subunit protein eL32">
    <location>
        <begin position="1"/>
        <end position="139"/>
    </location>
</feature>
<dbReference type="EMBL" id="AL590444">
    <property type="protein sequence ID" value="CAD25319.1"/>
    <property type="molecule type" value="Genomic_DNA"/>
</dbReference>
<dbReference type="RefSeq" id="NP_584815.1">
    <property type="nucleotide sequence ID" value="NM_001041165.1"/>
</dbReference>
<dbReference type="PDB" id="7QEP">
    <property type="method" value="EM"/>
    <property type="resolution" value="2.70 A"/>
    <property type="chains" value="O2=1-139"/>
</dbReference>
<dbReference type="PDBsum" id="7QEP"/>
<dbReference type="EMDB" id="EMD-13936"/>
<dbReference type="SMR" id="Q8SS18"/>
<dbReference type="FunCoup" id="Q8SS18">
    <property type="interactions" value="247"/>
</dbReference>
<dbReference type="STRING" id="284813.Q8SS18"/>
<dbReference type="GeneID" id="858963"/>
<dbReference type="KEGG" id="ecu:ECU04_1310"/>
<dbReference type="VEuPathDB" id="MicrosporidiaDB:ECU04_1310"/>
<dbReference type="HOGENOM" id="CLU_071479_4_1_1"/>
<dbReference type="InParanoid" id="Q8SS18"/>
<dbReference type="OMA" id="HPSGYEE"/>
<dbReference type="OrthoDB" id="268693at2759"/>
<dbReference type="Proteomes" id="UP000000819">
    <property type="component" value="Chromosome IV"/>
</dbReference>
<dbReference type="GO" id="GO:0022625">
    <property type="term" value="C:cytosolic large ribosomal subunit"/>
    <property type="evidence" value="ECO:0007669"/>
    <property type="project" value="TreeGrafter"/>
</dbReference>
<dbReference type="GO" id="GO:0003735">
    <property type="term" value="F:structural constituent of ribosome"/>
    <property type="evidence" value="ECO:0007669"/>
    <property type="project" value="InterPro"/>
</dbReference>
<dbReference type="GO" id="GO:0006412">
    <property type="term" value="P:translation"/>
    <property type="evidence" value="ECO:0007669"/>
    <property type="project" value="InterPro"/>
</dbReference>
<dbReference type="CDD" id="cd00513">
    <property type="entry name" value="Ribosomal_L32_L32e"/>
    <property type="match status" value="1"/>
</dbReference>
<dbReference type="InterPro" id="IPR001515">
    <property type="entry name" value="Ribosomal_eL32"/>
</dbReference>
<dbReference type="InterPro" id="IPR018263">
    <property type="entry name" value="Ribosomal_eL32_CS"/>
</dbReference>
<dbReference type="InterPro" id="IPR036351">
    <property type="entry name" value="Ribosomal_eL32_sf"/>
</dbReference>
<dbReference type="PANTHER" id="PTHR23413">
    <property type="entry name" value="60S RIBOSOMAL PROTEIN L32 AND DNA-DIRECTED RNA POLYMERASE II, SUBUNIT N"/>
    <property type="match status" value="1"/>
</dbReference>
<dbReference type="PANTHER" id="PTHR23413:SF1">
    <property type="entry name" value="RIBOSOMAL PROTEIN L32"/>
    <property type="match status" value="1"/>
</dbReference>
<dbReference type="Pfam" id="PF01655">
    <property type="entry name" value="Ribosomal_L32e"/>
    <property type="match status" value="1"/>
</dbReference>
<dbReference type="SMART" id="SM01393">
    <property type="entry name" value="Ribosomal_L32e"/>
    <property type="match status" value="1"/>
</dbReference>
<dbReference type="SUPFAM" id="SSF52042">
    <property type="entry name" value="Ribosomal protein L32e"/>
    <property type="match status" value="1"/>
</dbReference>
<dbReference type="PROSITE" id="PS00580">
    <property type="entry name" value="RIBOSOMAL_L32E"/>
    <property type="match status" value="1"/>
</dbReference>
<evidence type="ECO:0000305" key="1"/>
<proteinExistence type="evidence at protein level"/>
<sequence length="139" mass="16337">MSSELFDPKPLVEIKEAYRKNKKFIRHHSDRYKRVKPSWRRPHGIDSKVRKRCKGEREMPSIKYKKPKEIRHLLPNGLRKVRIFNINDLTPLTSLNRFYCGEIAHAVGARKRIAIVNRAKELGICLLNGNARLIPEIEE</sequence>
<reference key="1">
    <citation type="journal article" date="2001" name="Nature">
        <title>Genome sequence and gene compaction of the eukaryote parasite Encephalitozoon cuniculi.</title>
        <authorList>
            <person name="Katinka M.D."/>
            <person name="Duprat S."/>
            <person name="Cornillot E."/>
            <person name="Metenier G."/>
            <person name="Thomarat F."/>
            <person name="Prensier G."/>
            <person name="Barbe V."/>
            <person name="Peyretaillade E."/>
            <person name="Brottier P."/>
            <person name="Wincker P."/>
            <person name="Delbac F."/>
            <person name="El Alaoui H."/>
            <person name="Peyret P."/>
            <person name="Saurin W."/>
            <person name="Gouy M."/>
            <person name="Weissenbach J."/>
            <person name="Vivares C.P."/>
        </authorList>
    </citation>
    <scope>NUCLEOTIDE SEQUENCE [LARGE SCALE GENOMIC DNA]</scope>
    <source>
        <strain>GB-M1</strain>
    </source>
</reference>
<organism>
    <name type="scientific">Encephalitozoon cuniculi (strain GB-M1)</name>
    <name type="common">Microsporidian parasite</name>
    <dbReference type="NCBI Taxonomy" id="284813"/>
    <lineage>
        <taxon>Eukaryota</taxon>
        <taxon>Fungi</taxon>
        <taxon>Fungi incertae sedis</taxon>
        <taxon>Microsporidia</taxon>
        <taxon>Unikaryonidae</taxon>
        <taxon>Encephalitozoon</taxon>
    </lineage>
</organism>
<protein>
    <recommendedName>
        <fullName evidence="1">Large ribosomal subunit protein eL32</fullName>
    </recommendedName>
    <alternativeName>
        <fullName>60S ribosomal protein L32</fullName>
    </alternativeName>
</protein>